<comment type="function">
    <text evidence="4 9">Probable transcription factor. Controls central cell differentiation during female gametophyte development. Required for the expression of DEMETER and DD46, but not for the expression of FIS2 (PubMed:16798889). Probable transcription factor that may function in the maintenance of the proper function of the central cell in pollen tube attraction (Probable).</text>
</comment>
<comment type="subunit">
    <text evidence="3 5 6 7 8">Interacts with AGL61 and AGL62. Forms a heterodimer with AGL61 (PubMed:15805477, PubMed:18334668, PubMed:18599653, PubMed:18713950). Interacts with MEE14/CBP1 (PubMed:26462908).</text>
</comment>
<comment type="interaction">
    <interactant intactId="EBI-622424">
        <id>Q9FJK3</id>
    </interactant>
    <interactant intactId="EBI-1237976">
        <id>Q4PSU4</id>
        <label>AGL61</label>
    </interactant>
    <organismsDiffer>false</organismsDiffer>
    <experiments>4</experiments>
</comment>
<comment type="subcellular location">
    <subcellularLocation>
        <location evidence="2 4">Nucleus</location>
    </subcellularLocation>
</comment>
<comment type="tissue specificity">
    <text evidence="4">Expressed in the central cell of the female gametophyte and in early endosperm. Also detected in ovaries, young siliques, roots, leaves, stems, young flowers and anthers.</text>
</comment>
<comment type="miscellaneous">
    <text>Plants lacking AGL80 (mutant fem111) have defects in central cell and endosperm development.</text>
</comment>
<dbReference type="EMBL" id="DQ406752">
    <property type="protein sequence ID" value="ABD66036.1"/>
    <property type="molecule type" value="mRNA"/>
</dbReference>
<dbReference type="EMBL" id="AB015468">
    <property type="protein sequence ID" value="BAB10700.1"/>
    <property type="molecule type" value="Genomic_DNA"/>
</dbReference>
<dbReference type="EMBL" id="CP002688">
    <property type="protein sequence ID" value="AED95709.1"/>
    <property type="molecule type" value="Genomic_DNA"/>
</dbReference>
<dbReference type="EMBL" id="DQ056710">
    <property type="protein sequence ID" value="AAY78856.1"/>
    <property type="molecule type" value="mRNA"/>
</dbReference>
<dbReference type="RefSeq" id="NP_199678.1">
    <property type="nucleotide sequence ID" value="NM_124244.3"/>
</dbReference>
<dbReference type="SMR" id="Q9FJK3"/>
<dbReference type="BioGRID" id="20171">
    <property type="interactions" value="13"/>
</dbReference>
<dbReference type="FunCoup" id="Q9FJK3">
    <property type="interactions" value="95"/>
</dbReference>
<dbReference type="IntAct" id="Q9FJK3">
    <property type="interactions" value="12"/>
</dbReference>
<dbReference type="STRING" id="3702.Q9FJK3"/>
<dbReference type="PaxDb" id="3702-AT5G48670.1"/>
<dbReference type="EnsemblPlants" id="AT5G48670.1">
    <property type="protein sequence ID" value="AT5G48670.1"/>
    <property type="gene ID" value="AT5G48670"/>
</dbReference>
<dbReference type="GeneID" id="834925"/>
<dbReference type="Gramene" id="AT5G48670.1">
    <property type="protein sequence ID" value="AT5G48670.1"/>
    <property type="gene ID" value="AT5G48670"/>
</dbReference>
<dbReference type="KEGG" id="ath:AT5G48670"/>
<dbReference type="Araport" id="AT5G48670"/>
<dbReference type="TAIR" id="AT5G48670">
    <property type="gene designation" value="AGL80"/>
</dbReference>
<dbReference type="eggNOG" id="KOG0014">
    <property type="taxonomic scope" value="Eukaryota"/>
</dbReference>
<dbReference type="HOGENOM" id="CLU_053053_7_1_1"/>
<dbReference type="InParanoid" id="Q9FJK3"/>
<dbReference type="OMA" id="WFMEMMN"/>
<dbReference type="PhylomeDB" id="Q9FJK3"/>
<dbReference type="PRO" id="PR:Q9FJK3"/>
<dbReference type="Proteomes" id="UP000006548">
    <property type="component" value="Chromosome 5"/>
</dbReference>
<dbReference type="ExpressionAtlas" id="Q9FJK3">
    <property type="expression patterns" value="baseline and differential"/>
</dbReference>
<dbReference type="GO" id="GO:0005634">
    <property type="term" value="C:nucleus"/>
    <property type="evidence" value="ECO:0000314"/>
    <property type="project" value="TAIR"/>
</dbReference>
<dbReference type="GO" id="GO:0043078">
    <property type="term" value="C:polar nucleus"/>
    <property type="evidence" value="ECO:0000314"/>
    <property type="project" value="TAIR"/>
</dbReference>
<dbReference type="GO" id="GO:0000987">
    <property type="term" value="F:cis-regulatory region sequence-specific DNA binding"/>
    <property type="evidence" value="ECO:0007669"/>
    <property type="project" value="InterPro"/>
</dbReference>
<dbReference type="GO" id="GO:0003700">
    <property type="term" value="F:DNA-binding transcription factor activity"/>
    <property type="evidence" value="ECO:0000250"/>
    <property type="project" value="TAIR"/>
</dbReference>
<dbReference type="GO" id="GO:0000981">
    <property type="term" value="F:DNA-binding transcription factor activity, RNA polymerase II-specific"/>
    <property type="evidence" value="ECO:0007669"/>
    <property type="project" value="InterPro"/>
</dbReference>
<dbReference type="GO" id="GO:0046983">
    <property type="term" value="F:protein dimerization activity"/>
    <property type="evidence" value="ECO:0007669"/>
    <property type="project" value="InterPro"/>
</dbReference>
<dbReference type="GO" id="GO:0000976">
    <property type="term" value="F:transcription cis-regulatory region binding"/>
    <property type="evidence" value="ECO:0000353"/>
    <property type="project" value="TAIR"/>
</dbReference>
<dbReference type="GO" id="GO:0045944">
    <property type="term" value="P:positive regulation of transcription by RNA polymerase II"/>
    <property type="evidence" value="ECO:0007669"/>
    <property type="project" value="InterPro"/>
</dbReference>
<dbReference type="CDD" id="cd00266">
    <property type="entry name" value="MADS_SRF_like"/>
    <property type="match status" value="1"/>
</dbReference>
<dbReference type="FunFam" id="3.40.1810.10:FF:000018">
    <property type="entry name" value="agamous-like MADS-box protein AGL80"/>
    <property type="match status" value="1"/>
</dbReference>
<dbReference type="Gene3D" id="3.40.1810.10">
    <property type="entry name" value="Transcription factor, MADS-box"/>
    <property type="match status" value="1"/>
</dbReference>
<dbReference type="InterPro" id="IPR050142">
    <property type="entry name" value="MADS-box/MEF2_TF"/>
</dbReference>
<dbReference type="InterPro" id="IPR033897">
    <property type="entry name" value="SRF-like_MADS-box"/>
</dbReference>
<dbReference type="InterPro" id="IPR002100">
    <property type="entry name" value="TF_MADSbox"/>
</dbReference>
<dbReference type="InterPro" id="IPR036879">
    <property type="entry name" value="TF_MADSbox_sf"/>
</dbReference>
<dbReference type="PANTHER" id="PTHR48019">
    <property type="entry name" value="SERUM RESPONSE FACTOR HOMOLOG"/>
    <property type="match status" value="1"/>
</dbReference>
<dbReference type="Pfam" id="PF00319">
    <property type="entry name" value="SRF-TF"/>
    <property type="match status" value="1"/>
</dbReference>
<dbReference type="PRINTS" id="PR00404">
    <property type="entry name" value="MADSDOMAIN"/>
</dbReference>
<dbReference type="SMART" id="SM00432">
    <property type="entry name" value="MADS"/>
    <property type="match status" value="1"/>
</dbReference>
<dbReference type="SUPFAM" id="SSF55455">
    <property type="entry name" value="SRF-like"/>
    <property type="match status" value="1"/>
</dbReference>
<dbReference type="PROSITE" id="PS50066">
    <property type="entry name" value="MADS_BOX_2"/>
    <property type="match status" value="1"/>
</dbReference>
<feature type="chain" id="PRO_0000363651" description="Agamous-like MADS-box protein AGL80">
    <location>
        <begin position="1"/>
        <end position="321"/>
    </location>
</feature>
<feature type="domain" description="MADS-box" evidence="2">
    <location>
        <begin position="1"/>
        <end position="61"/>
    </location>
</feature>
<feature type="coiled-coil region" evidence="1">
    <location>
        <begin position="89"/>
        <end position="114"/>
    </location>
</feature>
<keyword id="KW-0175">Coiled coil</keyword>
<keyword id="KW-0238">DNA-binding</keyword>
<keyword id="KW-0539">Nucleus</keyword>
<keyword id="KW-1185">Reference proteome</keyword>
<keyword id="KW-0804">Transcription</keyword>
<keyword id="KW-0805">Transcription regulation</keyword>
<name>AGL80_ARATH</name>
<sequence>MTRKKVKLAYISNDSSRKATFKKRKKGLMKKVHELSTLCGITACAIIYSPYDTNPEVWPSNSGVQRVVSEFRTLPEMDQHKKMVDQEGFLKQRIAKATETLRRQRKDSRELEMTEVMFQCLIGNMEMFHLNIVDLNDLGYMIEQYLKDVNRRIEILRNSGTEIGESSSVAVAASEGNIPMPNLVATTAPTTTIYEVGSSSSFAAVANFVNPIDLQQFRHPAAQHVGLNEQPQNLNLNLNQNYNQNQEWFMEMMNHPEQMRYQTEQMGYQFMDDNHHNHIHHQPQEHQHQIHDESSNALDAANSSSIIPVTSSSITNKTWFH</sequence>
<gene>
    <name type="primary">AGL80</name>
    <name type="synonym">FEM111</name>
    <name type="ordered locus">At5g48670</name>
    <name type="ORF">K15N18.16</name>
</gene>
<reference key="1">
    <citation type="journal article" date="2006" name="Plant Cell">
        <title>AGL80 is required for central cell and endosperm development in Arabidopsis.</title>
        <authorList>
            <person name="Portereiko M.F."/>
            <person name="Lloyd A."/>
            <person name="Steffen J.G."/>
            <person name="Punwani J.A."/>
            <person name="Otsuga D."/>
            <person name="Drews G.N."/>
        </authorList>
    </citation>
    <scope>NUCLEOTIDE SEQUENCE [MRNA]</scope>
    <scope>FUNCTION</scope>
    <scope>MUTANT FEM111</scope>
    <scope>TISSUE SPECIFICITY</scope>
    <scope>SUBCELLULAR LOCATION</scope>
</reference>
<reference key="2">
    <citation type="journal article" date="1998" name="DNA Res.">
        <title>Structural analysis of Arabidopsis thaliana chromosome 5. VII. Sequence features of the regions of 1,013,767 bp covered by sixteen physically assigned P1 and TAC clones.</title>
        <authorList>
            <person name="Nakamura Y."/>
            <person name="Sato S."/>
            <person name="Asamizu E."/>
            <person name="Kaneko T."/>
            <person name="Kotani H."/>
            <person name="Miyajima N."/>
            <person name="Tabata S."/>
        </authorList>
    </citation>
    <scope>NUCLEOTIDE SEQUENCE [LARGE SCALE GENOMIC DNA]</scope>
    <source>
        <strain>cv. Columbia</strain>
    </source>
</reference>
<reference key="3">
    <citation type="journal article" date="2017" name="Plant J.">
        <title>Araport11: a complete reannotation of the Arabidopsis thaliana reference genome.</title>
        <authorList>
            <person name="Cheng C.Y."/>
            <person name="Krishnakumar V."/>
            <person name="Chan A.P."/>
            <person name="Thibaud-Nissen F."/>
            <person name="Schobel S."/>
            <person name="Town C.D."/>
        </authorList>
    </citation>
    <scope>GENOME REANNOTATION</scope>
    <source>
        <strain>cv. Columbia</strain>
    </source>
</reference>
<reference key="4">
    <citation type="submission" date="2005-05" db="EMBL/GenBank/DDBJ databases">
        <authorList>
            <person name="Underwood B.A."/>
            <person name="Xiao Y.-L."/>
            <person name="Moskal W.A. Jr."/>
            <person name="Monaghan E.L."/>
            <person name="Wang W."/>
            <person name="Redman J.C."/>
            <person name="Wu H.C."/>
            <person name="Utterback T."/>
            <person name="Town C.D."/>
        </authorList>
    </citation>
    <scope>NUCLEOTIDE SEQUENCE [LARGE SCALE MRNA]</scope>
    <source>
        <strain>cv. Columbia</strain>
    </source>
</reference>
<reference key="5">
    <citation type="journal article" date="2005" name="Plant Cell">
        <title>Comprehensive interaction map of the Arabidopsis MADS Box transcription factors.</title>
        <authorList>
            <person name="de Folter S."/>
            <person name="Immink R.G.H."/>
            <person name="Kieffer M."/>
            <person name="Parenicova L."/>
            <person name="Henz S.R."/>
            <person name="Weigel D."/>
            <person name="Busscher M."/>
            <person name="Kooiker M."/>
            <person name="Colombo L."/>
            <person name="Kater M.M."/>
            <person name="Davies B."/>
            <person name="Angenent G.C."/>
        </authorList>
    </citation>
    <scope>INTERACTION WITH AGL62</scope>
</reference>
<reference key="6">
    <citation type="journal article" date="2008" name="Plant Cell">
        <title>The MADS domain protein DIANA acts together with AGAMOUS-LIKE80 to specify the central cell in Arabidopsis ovules.</title>
        <authorList>
            <person name="Bemer M."/>
            <person name="Wolters-Arts M."/>
            <person name="Grossniklaus U."/>
            <person name="Angenent G.C."/>
        </authorList>
    </citation>
    <scope>INTERACTION WITH AGL61</scope>
</reference>
<reference key="7">
    <citation type="journal article" date="2008" name="Plant Physiol.">
        <title>AGL61 interacts with AGL80 and is required for central cell development in Arabidopsis.</title>
        <authorList>
            <person name="Steffen J.G."/>
            <person name="Kang I.-H."/>
            <person name="Portereiko M.F."/>
            <person name="Lloyd A."/>
            <person name="Drews G.N."/>
        </authorList>
    </citation>
    <scope>INTERACTION WITH AGL61</scope>
</reference>
<reference key="8">
    <citation type="journal article" date="2008" name="Plant Cell">
        <title>The AGL62 MADS domain protein regulates cellularization during endosperm development in Arabidopsis.</title>
        <authorList>
            <person name="Kang I.-H."/>
            <person name="Steffen J.G."/>
            <person name="Portereiko M.F."/>
            <person name="Lloyd A."/>
            <person name="Drews G.N."/>
        </authorList>
    </citation>
    <scope>INTERACTION WITH AGL62</scope>
</reference>
<reference key="9">
    <citation type="journal article" date="2015" name="Plant Cell">
        <title>Arabidopsis CBP1 is a novel regulator of transcription initiation in central cell-mediated pollen tube guidance.</title>
        <authorList>
            <person name="Li H.J."/>
            <person name="Zhu S.S."/>
            <person name="Zhang M.X."/>
            <person name="Wang T."/>
            <person name="Liang L."/>
            <person name="Xue Y."/>
            <person name="Shi D.Q."/>
            <person name="Liu J."/>
            <person name="Yang W.C."/>
        </authorList>
    </citation>
    <scope>FUNCTION</scope>
    <scope>INTERACTION WITH ME14/CBP1</scope>
</reference>
<evidence type="ECO:0000255" key="1"/>
<evidence type="ECO:0000255" key="2">
    <source>
        <dbReference type="PROSITE-ProRule" id="PRU00251"/>
    </source>
</evidence>
<evidence type="ECO:0000269" key="3">
    <source>
    </source>
</evidence>
<evidence type="ECO:0000269" key="4">
    <source>
    </source>
</evidence>
<evidence type="ECO:0000269" key="5">
    <source>
    </source>
</evidence>
<evidence type="ECO:0000269" key="6">
    <source>
    </source>
</evidence>
<evidence type="ECO:0000269" key="7">
    <source>
    </source>
</evidence>
<evidence type="ECO:0000269" key="8">
    <source>
    </source>
</evidence>
<evidence type="ECO:0000305" key="9">
    <source>
    </source>
</evidence>
<accession>Q9FJK3</accession>
<protein>
    <recommendedName>
        <fullName>Agamous-like MADS-box protein AGL80</fullName>
    </recommendedName>
</protein>
<proteinExistence type="evidence at protein level"/>
<organism>
    <name type="scientific">Arabidopsis thaliana</name>
    <name type="common">Mouse-ear cress</name>
    <dbReference type="NCBI Taxonomy" id="3702"/>
    <lineage>
        <taxon>Eukaryota</taxon>
        <taxon>Viridiplantae</taxon>
        <taxon>Streptophyta</taxon>
        <taxon>Embryophyta</taxon>
        <taxon>Tracheophyta</taxon>
        <taxon>Spermatophyta</taxon>
        <taxon>Magnoliopsida</taxon>
        <taxon>eudicotyledons</taxon>
        <taxon>Gunneridae</taxon>
        <taxon>Pentapetalae</taxon>
        <taxon>rosids</taxon>
        <taxon>malvids</taxon>
        <taxon>Brassicales</taxon>
        <taxon>Brassicaceae</taxon>
        <taxon>Camelineae</taxon>
        <taxon>Arabidopsis</taxon>
    </lineage>
</organism>